<protein>
    <recommendedName>
        <fullName evidence="1">DNA-directed RNA polymerase subunit beta'</fullName>
        <shortName evidence="1">RNAP subunit beta'</shortName>
        <ecNumber evidence="1">2.7.7.6</ecNumber>
    </recommendedName>
    <alternativeName>
        <fullName evidence="1">RNA polymerase subunit beta'</fullName>
    </alternativeName>
    <alternativeName>
        <fullName evidence="1">Transcriptase subunit beta'</fullName>
    </alternativeName>
</protein>
<evidence type="ECO:0000255" key="1">
    <source>
        <dbReference type="HAMAP-Rule" id="MF_01322"/>
    </source>
</evidence>
<reference key="1">
    <citation type="submission" date="2006-10" db="EMBL/GenBank/DDBJ databases">
        <title>Complete sequence of Syntrophobacter fumaroxidans MPOB.</title>
        <authorList>
            <consortium name="US DOE Joint Genome Institute"/>
            <person name="Copeland A."/>
            <person name="Lucas S."/>
            <person name="Lapidus A."/>
            <person name="Barry K."/>
            <person name="Detter J.C."/>
            <person name="Glavina del Rio T."/>
            <person name="Hammon N."/>
            <person name="Israni S."/>
            <person name="Pitluck S."/>
            <person name="Goltsman E.G."/>
            <person name="Martinez M."/>
            <person name="Schmutz J."/>
            <person name="Larimer F."/>
            <person name="Land M."/>
            <person name="Hauser L."/>
            <person name="Kyrpides N."/>
            <person name="Kim E."/>
            <person name="Boone D.R."/>
            <person name="Brockman F."/>
            <person name="Culley D."/>
            <person name="Ferry J."/>
            <person name="Gunsalus R."/>
            <person name="McInerney M.J."/>
            <person name="Morrison M."/>
            <person name="Plugge C."/>
            <person name="Rohlin L."/>
            <person name="Scholten J."/>
            <person name="Sieber J."/>
            <person name="Stams A.J.M."/>
            <person name="Worm P."/>
            <person name="Henstra A.M."/>
            <person name="Richardson P."/>
        </authorList>
    </citation>
    <scope>NUCLEOTIDE SEQUENCE [LARGE SCALE GENOMIC DNA]</scope>
    <source>
        <strain>DSM 10017 / MPOB</strain>
    </source>
</reference>
<proteinExistence type="inferred from homology"/>
<keyword id="KW-0240">DNA-directed RNA polymerase</keyword>
<keyword id="KW-0460">Magnesium</keyword>
<keyword id="KW-0479">Metal-binding</keyword>
<keyword id="KW-0548">Nucleotidyltransferase</keyword>
<keyword id="KW-1185">Reference proteome</keyword>
<keyword id="KW-0804">Transcription</keyword>
<keyword id="KW-0808">Transferase</keyword>
<keyword id="KW-0862">Zinc</keyword>
<organism>
    <name type="scientific">Syntrophobacter fumaroxidans (strain DSM 10017 / MPOB)</name>
    <dbReference type="NCBI Taxonomy" id="335543"/>
    <lineage>
        <taxon>Bacteria</taxon>
        <taxon>Pseudomonadati</taxon>
        <taxon>Thermodesulfobacteriota</taxon>
        <taxon>Syntrophobacteria</taxon>
        <taxon>Syntrophobacterales</taxon>
        <taxon>Syntrophobacteraceae</taxon>
        <taxon>Syntrophobacter</taxon>
    </lineage>
</organism>
<comment type="function">
    <text evidence="1">DNA-dependent RNA polymerase catalyzes the transcription of DNA into RNA using the four ribonucleoside triphosphates as substrates.</text>
</comment>
<comment type="catalytic activity">
    <reaction evidence="1">
        <text>RNA(n) + a ribonucleoside 5'-triphosphate = RNA(n+1) + diphosphate</text>
        <dbReference type="Rhea" id="RHEA:21248"/>
        <dbReference type="Rhea" id="RHEA-COMP:14527"/>
        <dbReference type="Rhea" id="RHEA-COMP:17342"/>
        <dbReference type="ChEBI" id="CHEBI:33019"/>
        <dbReference type="ChEBI" id="CHEBI:61557"/>
        <dbReference type="ChEBI" id="CHEBI:140395"/>
        <dbReference type="EC" id="2.7.7.6"/>
    </reaction>
</comment>
<comment type="cofactor">
    <cofactor evidence="1">
        <name>Mg(2+)</name>
        <dbReference type="ChEBI" id="CHEBI:18420"/>
    </cofactor>
    <text evidence="1">Binds 1 Mg(2+) ion per subunit.</text>
</comment>
<comment type="cofactor">
    <cofactor evidence="1">
        <name>Zn(2+)</name>
        <dbReference type="ChEBI" id="CHEBI:29105"/>
    </cofactor>
    <text evidence="1">Binds 2 Zn(2+) ions per subunit.</text>
</comment>
<comment type="subunit">
    <text evidence="1">The RNAP catalytic core consists of 2 alpha, 1 beta, 1 beta' and 1 omega subunit. When a sigma factor is associated with the core the holoenzyme is formed, which can initiate transcription.</text>
</comment>
<comment type="similarity">
    <text evidence="1">Belongs to the RNA polymerase beta' chain family.</text>
</comment>
<accession>A0LII5</accession>
<sequence length="1351" mass="150843">MKELYSLFMKPKDPLHFNAVKIMISSPERIREWSYGEVKKPETINYRTFKPERDGLFCARIFGPIKDYECNCGKYKRMKHRGVVCEKCGVEVIQSKVRRERMGHIELASPVAHIWFLRSLPSKIGNLLDLTLRELEKVLYFDSYIVLDPGDTPLTKGELLTEEKYRQMVQEHGSGFVAGIGAESIKQLLAGLDLEKLAVELREEMSKTNSMAKRKKLAKRLKIIDAFRESENRPEWMIMDVIPVLPPDLRPLVPLDGGRFATSDLNDLYRRVINRNNRLKRLQELNAPDIIIRNEKRMLQEAVDVLFDNGRRGKTITGASKRPLKSLSDMLKGKQGRFRQNLLGKRVDYSGRTVIVIGPNLRLHQCGLPKKMALELFKPFIYNKLEEKGYVTTIKAAKKMVERETPEVWDTLDEVVREFPVMLNRAPTLHRLGIQAFEPILIEGKAIQLHPLVCTAFNADFDGDQMAVHVPLSIEAQAEARILMMSTNNILSPAHGDPIIVPSQDIVLGIYYMTREKPFAKGEDRVFSSREEVRCAFDAGEADLHARVHVRMGDERVKTTVGRVLLSEILPEEMPFSAVNRVMNKKVLAGLIDMCYRTAGIKATVLLADRLKDLGYEYATRSGLSISIKDMTIPHRKSEILDQAFDLVKEIERQYNEGLITEGEKYNKAVDIWAKATEDVAAEMMKEIATTEVGGPEGEARVVEAFNPIFMMADSGARGSKDQMRQLAGMRGLMAKPSGEIIETPITANFREGLTVLQYFISTHGARKGLADTALKTANSGYLTRRLVDVSQDVIISEPDCGTMDGIEVEALLEAGEIIQRLGDRILGRIAQEDILDPVTAEVLVPMGTEIDEQRVQLIEDAGIEKVNIRSALTCRSLRGVCTMCYGRDLAQGKLAQIGEAIGIIAAQSIGEPGTQLTMRTFHIGGTASKSIERTSINNRYAGTVRFLNLNTVHNRDGDLIAMNRNGEISIISESGRERERYVIIYGAKLKVTDGQPVEPDTLLAEWDPFTTPILTEVAGAAKFGDIVEGQTMQEKLDPVTGKSSKVVVEYRESDVRPRISIKDDKGKTARVGEGGFARYFMPVGAILMVNEGDAIFPGDVLARIPRETTKTKDITGGLPRVAELFEVRKPKEHAVITEIDGVIGFGKDTKGKRKVIVSPEVGDARDYLIPKGKHISVHEGDYVRAGEPLMDGSPNPHDILTVLGEKEVAKYLVDEVQQVYRLQGVKINDKHIEVIVRQMLKRVRITDPGDSEFLMGEHVEKPIFEEINSKLTEEDKRPAAAEPLLLGITKASLSTQSFISAASFQETTKVLTDAATAGKVDYLLGLKENVIMGRLIPAGSGLRTYREVRK</sequence>
<feature type="chain" id="PRO_0000308894" description="DNA-directed RNA polymerase subunit beta'">
    <location>
        <begin position="1"/>
        <end position="1351"/>
    </location>
</feature>
<feature type="binding site" evidence="1">
    <location>
        <position position="70"/>
    </location>
    <ligand>
        <name>Zn(2+)</name>
        <dbReference type="ChEBI" id="CHEBI:29105"/>
        <label>1</label>
    </ligand>
</feature>
<feature type="binding site" evidence="1">
    <location>
        <position position="72"/>
    </location>
    <ligand>
        <name>Zn(2+)</name>
        <dbReference type="ChEBI" id="CHEBI:29105"/>
        <label>1</label>
    </ligand>
</feature>
<feature type="binding site" evidence="1">
    <location>
        <position position="85"/>
    </location>
    <ligand>
        <name>Zn(2+)</name>
        <dbReference type="ChEBI" id="CHEBI:29105"/>
        <label>1</label>
    </ligand>
</feature>
<feature type="binding site" evidence="1">
    <location>
        <position position="88"/>
    </location>
    <ligand>
        <name>Zn(2+)</name>
        <dbReference type="ChEBI" id="CHEBI:29105"/>
        <label>1</label>
    </ligand>
</feature>
<feature type="binding site" evidence="1">
    <location>
        <position position="460"/>
    </location>
    <ligand>
        <name>Mg(2+)</name>
        <dbReference type="ChEBI" id="CHEBI:18420"/>
    </ligand>
</feature>
<feature type="binding site" evidence="1">
    <location>
        <position position="462"/>
    </location>
    <ligand>
        <name>Mg(2+)</name>
        <dbReference type="ChEBI" id="CHEBI:18420"/>
    </ligand>
</feature>
<feature type="binding site" evidence="1">
    <location>
        <position position="464"/>
    </location>
    <ligand>
        <name>Mg(2+)</name>
        <dbReference type="ChEBI" id="CHEBI:18420"/>
    </ligand>
</feature>
<feature type="binding site" evidence="1">
    <location>
        <position position="801"/>
    </location>
    <ligand>
        <name>Zn(2+)</name>
        <dbReference type="ChEBI" id="CHEBI:29105"/>
        <label>2</label>
    </ligand>
</feature>
<feature type="binding site" evidence="1">
    <location>
        <position position="875"/>
    </location>
    <ligand>
        <name>Zn(2+)</name>
        <dbReference type="ChEBI" id="CHEBI:29105"/>
        <label>2</label>
    </ligand>
</feature>
<feature type="binding site" evidence="1">
    <location>
        <position position="882"/>
    </location>
    <ligand>
        <name>Zn(2+)</name>
        <dbReference type="ChEBI" id="CHEBI:29105"/>
        <label>2</label>
    </ligand>
</feature>
<feature type="binding site" evidence="1">
    <location>
        <position position="885"/>
    </location>
    <ligand>
        <name>Zn(2+)</name>
        <dbReference type="ChEBI" id="CHEBI:29105"/>
        <label>2</label>
    </ligand>
</feature>
<gene>
    <name evidence="1" type="primary">rpoC</name>
    <name type="ordered locus">Sfum_1550</name>
</gene>
<name>RPOC_SYNFM</name>
<dbReference type="EC" id="2.7.7.6" evidence="1"/>
<dbReference type="EMBL" id="CP000478">
    <property type="protein sequence ID" value="ABK17237.1"/>
    <property type="molecule type" value="Genomic_DNA"/>
</dbReference>
<dbReference type="RefSeq" id="WP_011698408.1">
    <property type="nucleotide sequence ID" value="NC_008554.1"/>
</dbReference>
<dbReference type="SMR" id="A0LII5"/>
<dbReference type="FunCoup" id="A0LII5">
    <property type="interactions" value="566"/>
</dbReference>
<dbReference type="STRING" id="335543.Sfum_1550"/>
<dbReference type="KEGG" id="sfu:Sfum_1550"/>
<dbReference type="eggNOG" id="COG0086">
    <property type="taxonomic scope" value="Bacteria"/>
</dbReference>
<dbReference type="HOGENOM" id="CLU_000524_3_1_7"/>
<dbReference type="InParanoid" id="A0LII5"/>
<dbReference type="OrthoDB" id="9815296at2"/>
<dbReference type="Proteomes" id="UP000001784">
    <property type="component" value="Chromosome"/>
</dbReference>
<dbReference type="GO" id="GO:0000428">
    <property type="term" value="C:DNA-directed RNA polymerase complex"/>
    <property type="evidence" value="ECO:0007669"/>
    <property type="project" value="UniProtKB-KW"/>
</dbReference>
<dbReference type="GO" id="GO:0003677">
    <property type="term" value="F:DNA binding"/>
    <property type="evidence" value="ECO:0007669"/>
    <property type="project" value="UniProtKB-UniRule"/>
</dbReference>
<dbReference type="GO" id="GO:0003899">
    <property type="term" value="F:DNA-directed RNA polymerase activity"/>
    <property type="evidence" value="ECO:0007669"/>
    <property type="project" value="UniProtKB-UniRule"/>
</dbReference>
<dbReference type="GO" id="GO:0000287">
    <property type="term" value="F:magnesium ion binding"/>
    <property type="evidence" value="ECO:0007669"/>
    <property type="project" value="UniProtKB-UniRule"/>
</dbReference>
<dbReference type="GO" id="GO:0008270">
    <property type="term" value="F:zinc ion binding"/>
    <property type="evidence" value="ECO:0007669"/>
    <property type="project" value="UniProtKB-UniRule"/>
</dbReference>
<dbReference type="GO" id="GO:0006351">
    <property type="term" value="P:DNA-templated transcription"/>
    <property type="evidence" value="ECO:0007669"/>
    <property type="project" value="UniProtKB-UniRule"/>
</dbReference>
<dbReference type="CDD" id="cd02655">
    <property type="entry name" value="RNAP_beta'_C"/>
    <property type="match status" value="1"/>
</dbReference>
<dbReference type="CDD" id="cd01609">
    <property type="entry name" value="RNAP_beta'_N"/>
    <property type="match status" value="1"/>
</dbReference>
<dbReference type="FunFam" id="1.10.132.30:FF:000003">
    <property type="entry name" value="DNA-directed RNA polymerase subunit beta"/>
    <property type="match status" value="1"/>
</dbReference>
<dbReference type="FunFam" id="1.10.40.90:FF:000001">
    <property type="entry name" value="DNA-directed RNA polymerase subunit beta"/>
    <property type="match status" value="1"/>
</dbReference>
<dbReference type="Gene3D" id="1.10.132.30">
    <property type="match status" value="1"/>
</dbReference>
<dbReference type="Gene3D" id="1.10.150.390">
    <property type="match status" value="1"/>
</dbReference>
<dbReference type="Gene3D" id="1.10.1790.20">
    <property type="match status" value="1"/>
</dbReference>
<dbReference type="Gene3D" id="1.10.40.90">
    <property type="match status" value="1"/>
</dbReference>
<dbReference type="Gene3D" id="2.40.40.20">
    <property type="match status" value="1"/>
</dbReference>
<dbReference type="Gene3D" id="2.40.50.100">
    <property type="match status" value="3"/>
</dbReference>
<dbReference type="Gene3D" id="4.10.860.120">
    <property type="entry name" value="RNA polymerase II, clamp domain"/>
    <property type="match status" value="1"/>
</dbReference>
<dbReference type="Gene3D" id="1.10.274.100">
    <property type="entry name" value="RNA polymerase Rpb1, domain 3"/>
    <property type="match status" value="2"/>
</dbReference>
<dbReference type="HAMAP" id="MF_01322">
    <property type="entry name" value="RNApol_bact_RpoC"/>
    <property type="match status" value="1"/>
</dbReference>
<dbReference type="InterPro" id="IPR045867">
    <property type="entry name" value="DNA-dir_RpoC_beta_prime"/>
</dbReference>
<dbReference type="InterPro" id="IPR012754">
    <property type="entry name" value="DNA-dir_RpoC_beta_prime_bact"/>
</dbReference>
<dbReference type="InterPro" id="IPR000722">
    <property type="entry name" value="RNA_pol_asu"/>
</dbReference>
<dbReference type="InterPro" id="IPR006592">
    <property type="entry name" value="RNA_pol_N"/>
</dbReference>
<dbReference type="InterPro" id="IPR007080">
    <property type="entry name" value="RNA_pol_Rpb1_1"/>
</dbReference>
<dbReference type="InterPro" id="IPR007066">
    <property type="entry name" value="RNA_pol_Rpb1_3"/>
</dbReference>
<dbReference type="InterPro" id="IPR042102">
    <property type="entry name" value="RNA_pol_Rpb1_3_sf"/>
</dbReference>
<dbReference type="InterPro" id="IPR007083">
    <property type="entry name" value="RNA_pol_Rpb1_4"/>
</dbReference>
<dbReference type="InterPro" id="IPR007081">
    <property type="entry name" value="RNA_pol_Rpb1_5"/>
</dbReference>
<dbReference type="InterPro" id="IPR044893">
    <property type="entry name" value="RNA_pol_Rpb1_clamp_domain"/>
</dbReference>
<dbReference type="InterPro" id="IPR038120">
    <property type="entry name" value="Rpb1_funnel_sf"/>
</dbReference>
<dbReference type="NCBIfam" id="TIGR02386">
    <property type="entry name" value="rpoC_TIGR"/>
    <property type="match status" value="1"/>
</dbReference>
<dbReference type="PANTHER" id="PTHR19376">
    <property type="entry name" value="DNA-DIRECTED RNA POLYMERASE"/>
    <property type="match status" value="1"/>
</dbReference>
<dbReference type="PANTHER" id="PTHR19376:SF54">
    <property type="entry name" value="DNA-DIRECTED RNA POLYMERASE SUBUNIT BETA"/>
    <property type="match status" value="1"/>
</dbReference>
<dbReference type="Pfam" id="PF04997">
    <property type="entry name" value="RNA_pol_Rpb1_1"/>
    <property type="match status" value="1"/>
</dbReference>
<dbReference type="Pfam" id="PF00623">
    <property type="entry name" value="RNA_pol_Rpb1_2"/>
    <property type="match status" value="1"/>
</dbReference>
<dbReference type="Pfam" id="PF04983">
    <property type="entry name" value="RNA_pol_Rpb1_3"/>
    <property type="match status" value="1"/>
</dbReference>
<dbReference type="Pfam" id="PF05000">
    <property type="entry name" value="RNA_pol_Rpb1_4"/>
    <property type="match status" value="1"/>
</dbReference>
<dbReference type="Pfam" id="PF04998">
    <property type="entry name" value="RNA_pol_Rpb1_5"/>
    <property type="match status" value="1"/>
</dbReference>
<dbReference type="SMART" id="SM00663">
    <property type="entry name" value="RPOLA_N"/>
    <property type="match status" value="1"/>
</dbReference>
<dbReference type="SUPFAM" id="SSF64484">
    <property type="entry name" value="beta and beta-prime subunits of DNA dependent RNA-polymerase"/>
    <property type="match status" value="1"/>
</dbReference>